<keyword id="KW-0997">Cell inner membrane</keyword>
<keyword id="KW-1003">Cell membrane</keyword>
<keyword id="KW-0472">Membrane</keyword>
<keyword id="KW-0812">Transmembrane</keyword>
<keyword id="KW-1133">Transmembrane helix</keyword>
<organism>
    <name type="scientific">Salmonella agona (strain SL483)</name>
    <dbReference type="NCBI Taxonomy" id="454166"/>
    <lineage>
        <taxon>Bacteria</taxon>
        <taxon>Pseudomonadati</taxon>
        <taxon>Pseudomonadota</taxon>
        <taxon>Gammaproteobacteria</taxon>
        <taxon>Enterobacterales</taxon>
        <taxon>Enterobacteriaceae</taxon>
        <taxon>Salmonella</taxon>
    </lineage>
</organism>
<accession>B5F8I5</accession>
<feature type="chain" id="PRO_1000136145" description="Protein TsgA">
    <location>
        <begin position="1"/>
        <end position="393"/>
    </location>
</feature>
<feature type="transmembrane region" description="Helical" evidence="1">
    <location>
        <begin position="11"/>
        <end position="31"/>
    </location>
</feature>
<feature type="transmembrane region" description="Helical" evidence="1">
    <location>
        <begin position="51"/>
        <end position="71"/>
    </location>
</feature>
<feature type="transmembrane region" description="Helical" evidence="1">
    <location>
        <begin position="78"/>
        <end position="98"/>
    </location>
</feature>
<feature type="transmembrane region" description="Helical" evidence="1">
    <location>
        <begin position="101"/>
        <end position="121"/>
    </location>
</feature>
<feature type="transmembrane region" description="Helical" evidence="1">
    <location>
        <begin position="134"/>
        <end position="154"/>
    </location>
</feature>
<feature type="transmembrane region" description="Helical" evidence="1">
    <location>
        <begin position="162"/>
        <end position="182"/>
    </location>
</feature>
<feature type="transmembrane region" description="Helical" evidence="1">
    <location>
        <begin position="206"/>
        <end position="226"/>
    </location>
</feature>
<feature type="transmembrane region" description="Helical" evidence="1">
    <location>
        <begin position="245"/>
        <end position="265"/>
    </location>
</feature>
<feature type="transmembrane region" description="Helical" evidence="1">
    <location>
        <begin position="273"/>
        <end position="293"/>
    </location>
</feature>
<feature type="transmembrane region" description="Helical" evidence="1">
    <location>
        <begin position="298"/>
        <end position="318"/>
    </location>
</feature>
<feature type="transmembrane region" description="Helical" evidence="1">
    <location>
        <begin position="332"/>
        <end position="352"/>
    </location>
</feature>
<feature type="transmembrane region" description="Helical" evidence="1">
    <location>
        <begin position="361"/>
        <end position="381"/>
    </location>
</feature>
<evidence type="ECO:0000255" key="1">
    <source>
        <dbReference type="HAMAP-Rule" id="MF_01044"/>
    </source>
</evidence>
<protein>
    <recommendedName>
        <fullName evidence="1">Protein TsgA</fullName>
    </recommendedName>
</protein>
<sequence length="393" mass="43151">MTNSNRIKLTWISFLSYALTGALVIVTGMVMGNIADYFQLPVSSMSNTFTFLNAGILISIFLNAWLMEIIPLKTQLRFGFILMVLAVAGLMFSHSLALFSAAMFVLGLVSGITMSIGTFLITQLYEGRQRGSRLLFTDSFFSMAGMIFPMVAAFLLARSIEWYWVYACIGLVYLAIFILTFGCEFPALGKHAQHSQAPVVKEKWGIGVLFLAVAALCYILGQLGFISWVPEYAKGLGMSLNDAGALVSDFWMSYMFGMWAFSFILRFFDLQRILTVLAGMAAVLMYLFITGTQAHMPWFILTLGFFSSAIYTSIITLGSQQTKVASPKLVNFILTCGTIGTMLTFVVTGPIVAHSGPQAALLTANGLYAVVFVMCFALGFVSRHRQHSAPATH</sequence>
<gene>
    <name evidence="1" type="primary">tsgA</name>
    <name type="ordered locus">SeAg_B3670</name>
</gene>
<reference key="1">
    <citation type="journal article" date="2011" name="J. Bacteriol.">
        <title>Comparative genomics of 28 Salmonella enterica isolates: evidence for CRISPR-mediated adaptive sublineage evolution.</title>
        <authorList>
            <person name="Fricke W.F."/>
            <person name="Mammel M.K."/>
            <person name="McDermott P.F."/>
            <person name="Tartera C."/>
            <person name="White D.G."/>
            <person name="Leclerc J.E."/>
            <person name="Ravel J."/>
            <person name="Cebula T.A."/>
        </authorList>
    </citation>
    <scope>NUCLEOTIDE SEQUENCE [LARGE SCALE GENOMIC DNA]</scope>
    <source>
        <strain>SL483</strain>
    </source>
</reference>
<dbReference type="EMBL" id="CP001138">
    <property type="protein sequence ID" value="ACH51471.1"/>
    <property type="molecule type" value="Genomic_DNA"/>
</dbReference>
<dbReference type="RefSeq" id="WP_000185267.1">
    <property type="nucleotide sequence ID" value="NC_011149.1"/>
</dbReference>
<dbReference type="SMR" id="B5F8I5"/>
<dbReference type="KEGG" id="sea:SeAg_B3670"/>
<dbReference type="HOGENOM" id="CLU_056916_0_0_6"/>
<dbReference type="Proteomes" id="UP000008819">
    <property type="component" value="Chromosome"/>
</dbReference>
<dbReference type="GO" id="GO:0005886">
    <property type="term" value="C:plasma membrane"/>
    <property type="evidence" value="ECO:0007669"/>
    <property type="project" value="UniProtKB-SubCell"/>
</dbReference>
<dbReference type="GO" id="GO:0022857">
    <property type="term" value="F:transmembrane transporter activity"/>
    <property type="evidence" value="ECO:0007669"/>
    <property type="project" value="InterPro"/>
</dbReference>
<dbReference type="FunFam" id="1.20.1250.20:FF:000032">
    <property type="entry name" value="Protein TsgA"/>
    <property type="match status" value="1"/>
</dbReference>
<dbReference type="FunFam" id="1.20.1250.20:FF:000052">
    <property type="entry name" value="Protein TsgA"/>
    <property type="match status" value="1"/>
</dbReference>
<dbReference type="Gene3D" id="1.20.1250.20">
    <property type="entry name" value="MFS general substrate transporter like domains"/>
    <property type="match status" value="2"/>
</dbReference>
<dbReference type="HAMAP" id="MF_01044">
    <property type="entry name" value="MFS_TsgA"/>
    <property type="match status" value="1"/>
</dbReference>
<dbReference type="InterPro" id="IPR011701">
    <property type="entry name" value="MFS"/>
</dbReference>
<dbReference type="InterPro" id="IPR020846">
    <property type="entry name" value="MFS_dom"/>
</dbReference>
<dbReference type="InterPro" id="IPR036259">
    <property type="entry name" value="MFS_trans_sf"/>
</dbReference>
<dbReference type="InterPro" id="IPR023528">
    <property type="entry name" value="MFS_TsgA"/>
</dbReference>
<dbReference type="InterPro" id="IPR050375">
    <property type="entry name" value="MFS_TsgA-like"/>
</dbReference>
<dbReference type="NCBIfam" id="NF002982">
    <property type="entry name" value="PRK03699.1"/>
    <property type="match status" value="1"/>
</dbReference>
<dbReference type="PANTHER" id="PTHR43702">
    <property type="entry name" value="L-FUCOSE-PROTON SYMPORTER"/>
    <property type="match status" value="1"/>
</dbReference>
<dbReference type="PANTHER" id="PTHR43702:SF3">
    <property type="entry name" value="PROTEIN TSGA"/>
    <property type="match status" value="1"/>
</dbReference>
<dbReference type="Pfam" id="PF07690">
    <property type="entry name" value="MFS_1"/>
    <property type="match status" value="1"/>
</dbReference>
<dbReference type="SUPFAM" id="SSF103473">
    <property type="entry name" value="MFS general substrate transporter"/>
    <property type="match status" value="1"/>
</dbReference>
<dbReference type="PROSITE" id="PS50850">
    <property type="entry name" value="MFS"/>
    <property type="match status" value="1"/>
</dbReference>
<proteinExistence type="inferred from homology"/>
<comment type="subcellular location">
    <subcellularLocation>
        <location evidence="1">Cell inner membrane</location>
        <topology evidence="1">Multi-pass membrane protein</topology>
    </subcellularLocation>
</comment>
<comment type="similarity">
    <text evidence="1">Belongs to the major facilitator superfamily. TsgA family.</text>
</comment>
<name>TSGA_SALA4</name>